<gene>
    <name type="primary">MT-CYB</name>
    <name type="synonym">COB</name>
    <name type="synonym">CYTB</name>
    <name type="synonym">MTCYB</name>
</gene>
<comment type="function">
    <text evidence="2">Component of the ubiquinol-cytochrome c reductase complex (complex III or cytochrome b-c1 complex) that is part of the mitochondrial respiratory chain. The b-c1 complex mediates electron transfer from ubiquinol to cytochrome c. Contributes to the generation of a proton gradient across the mitochondrial membrane that is then used for ATP synthesis.</text>
</comment>
<comment type="cofactor">
    <cofactor evidence="2">
        <name>heme b</name>
        <dbReference type="ChEBI" id="CHEBI:60344"/>
    </cofactor>
    <text evidence="2">Binds 2 heme b groups non-covalently.</text>
</comment>
<comment type="subunit">
    <text evidence="2">The cytochrome bc1 complex contains 11 subunits: 3 respiratory subunits (MT-CYB, CYC1 and UQCRFS1), 2 core proteins (UQCRC1 and UQCRC2) and 6 low-molecular weight proteins (UQCRH/QCR6, UQCRB/QCR7, UQCRQ/QCR8, UQCR10/QCR9, UQCR11/QCR10 and a cleavage product of UQCRFS1). This cytochrome bc1 complex then forms a dimer.</text>
</comment>
<comment type="subcellular location">
    <subcellularLocation>
        <location evidence="2">Mitochondrion inner membrane</location>
        <topology evidence="2">Multi-pass membrane protein</topology>
    </subcellularLocation>
</comment>
<comment type="miscellaneous">
    <text evidence="1">Heme 1 (or BL or b562) is low-potential and absorbs at about 562 nm, and heme 2 (or BH or b566) is high-potential and absorbs at about 566 nm.</text>
</comment>
<comment type="similarity">
    <text evidence="3 4">Belongs to the cytochrome b family.</text>
</comment>
<comment type="caution">
    <text evidence="2">The full-length protein contains only eight transmembrane helices, not nine as predicted by bioinformatics tools.</text>
</comment>
<evidence type="ECO:0000250" key="1"/>
<evidence type="ECO:0000250" key="2">
    <source>
        <dbReference type="UniProtKB" id="P00157"/>
    </source>
</evidence>
<evidence type="ECO:0000255" key="3">
    <source>
        <dbReference type="PROSITE-ProRule" id="PRU00967"/>
    </source>
</evidence>
<evidence type="ECO:0000255" key="4">
    <source>
        <dbReference type="PROSITE-ProRule" id="PRU00968"/>
    </source>
</evidence>
<protein>
    <recommendedName>
        <fullName>Cytochrome b</fullName>
    </recommendedName>
    <alternativeName>
        <fullName>Complex III subunit 3</fullName>
    </alternativeName>
    <alternativeName>
        <fullName>Complex III subunit III</fullName>
    </alternativeName>
    <alternativeName>
        <fullName>Cytochrome b-c1 complex subunit 3</fullName>
    </alternativeName>
    <alternativeName>
        <fullName>Ubiquinol-cytochrome-c reductase complex cytochrome b subunit</fullName>
    </alternativeName>
</protein>
<feature type="chain" id="PRO_0000061253" description="Cytochrome b">
    <location>
        <begin position="1"/>
        <end position="379"/>
    </location>
</feature>
<feature type="transmembrane region" description="Helical" evidence="2">
    <location>
        <begin position="33"/>
        <end position="53"/>
    </location>
</feature>
<feature type="transmembrane region" description="Helical" evidence="2">
    <location>
        <begin position="77"/>
        <end position="98"/>
    </location>
</feature>
<feature type="transmembrane region" description="Helical" evidence="2">
    <location>
        <begin position="113"/>
        <end position="133"/>
    </location>
</feature>
<feature type="transmembrane region" description="Helical" evidence="2">
    <location>
        <begin position="178"/>
        <end position="198"/>
    </location>
</feature>
<feature type="transmembrane region" description="Helical" evidence="2">
    <location>
        <begin position="226"/>
        <end position="246"/>
    </location>
</feature>
<feature type="transmembrane region" description="Helical" evidence="2">
    <location>
        <begin position="288"/>
        <end position="308"/>
    </location>
</feature>
<feature type="transmembrane region" description="Helical" evidence="2">
    <location>
        <begin position="320"/>
        <end position="340"/>
    </location>
</feature>
<feature type="transmembrane region" description="Helical" evidence="2">
    <location>
        <begin position="347"/>
        <end position="367"/>
    </location>
</feature>
<feature type="binding site" description="axial binding residue" evidence="2">
    <location>
        <position position="83"/>
    </location>
    <ligand>
        <name>heme b</name>
        <dbReference type="ChEBI" id="CHEBI:60344"/>
        <label>b562</label>
    </ligand>
    <ligandPart>
        <name>Fe</name>
        <dbReference type="ChEBI" id="CHEBI:18248"/>
    </ligandPart>
</feature>
<feature type="binding site" description="axial binding residue" evidence="2">
    <location>
        <position position="97"/>
    </location>
    <ligand>
        <name>heme b</name>
        <dbReference type="ChEBI" id="CHEBI:60344"/>
        <label>b566</label>
    </ligand>
    <ligandPart>
        <name>Fe</name>
        <dbReference type="ChEBI" id="CHEBI:18248"/>
    </ligandPart>
</feature>
<feature type="binding site" description="axial binding residue" evidence="2">
    <location>
        <position position="182"/>
    </location>
    <ligand>
        <name>heme b</name>
        <dbReference type="ChEBI" id="CHEBI:60344"/>
        <label>b562</label>
    </ligand>
    <ligandPart>
        <name>Fe</name>
        <dbReference type="ChEBI" id="CHEBI:18248"/>
    </ligandPart>
</feature>
<feature type="binding site" description="axial binding residue" evidence="2">
    <location>
        <position position="196"/>
    </location>
    <ligand>
        <name>heme b</name>
        <dbReference type="ChEBI" id="CHEBI:60344"/>
        <label>b566</label>
    </ligand>
    <ligandPart>
        <name>Fe</name>
        <dbReference type="ChEBI" id="CHEBI:18248"/>
    </ligandPart>
</feature>
<feature type="binding site" evidence="2">
    <location>
        <position position="201"/>
    </location>
    <ligand>
        <name>a ubiquinone</name>
        <dbReference type="ChEBI" id="CHEBI:16389"/>
    </ligand>
</feature>
<geneLocation type="mitochondrion"/>
<sequence length="379" mass="42743">MTNIRKSHPLMKIINSSFIDLPAPSNISSWWNFGSLLGICLALQILTGLFLAMHYTSDTATAFNSVTHICRDVNYGWVLRYMHANGASMFFICLYLHVGRGLYYGSYMYTETWNIGVILLFAVMATAFMGYVLPWGQMSFWGATVITNLLSAIPYIGADLVEWIWGGFSVDKATLTRFFAFHFLLPFIIAAMVMVHLLFLHETGSNNPTGIPSNADMIPFHPYYTIKDILGLLLMITALLMLVLFSPDMLGDPDNYTPANPLNTPPHIKPEWYFLFAYAILRSIPNKLGGVLALVLSILILIIIPLLHTSKQRSMTFRPLSQCLFWLLAADLFTLTWIGGQPVEHPYVIIGQLASILYFSIIIILMPLTSLMENHLLKW</sequence>
<accession>Q956Z3</accession>
<organism>
    <name type="scientific">Myotis thysanodes</name>
    <name type="common">Fringed myotis</name>
    <dbReference type="NCBI Taxonomy" id="153287"/>
    <lineage>
        <taxon>Eukaryota</taxon>
        <taxon>Metazoa</taxon>
        <taxon>Chordata</taxon>
        <taxon>Craniata</taxon>
        <taxon>Vertebrata</taxon>
        <taxon>Euteleostomi</taxon>
        <taxon>Mammalia</taxon>
        <taxon>Eutheria</taxon>
        <taxon>Laurasiatheria</taxon>
        <taxon>Chiroptera</taxon>
        <taxon>Yangochiroptera</taxon>
        <taxon>Vespertilionidae</taxon>
        <taxon>Myotis</taxon>
    </lineage>
</organism>
<dbReference type="EMBL" id="AF376869">
    <property type="protein sequence ID" value="AAK57688.1"/>
    <property type="molecule type" value="Genomic_DNA"/>
</dbReference>
<dbReference type="SMR" id="Q956Z3"/>
<dbReference type="GO" id="GO:0005743">
    <property type="term" value="C:mitochondrial inner membrane"/>
    <property type="evidence" value="ECO:0007669"/>
    <property type="project" value="UniProtKB-SubCell"/>
</dbReference>
<dbReference type="GO" id="GO:0045275">
    <property type="term" value="C:respiratory chain complex III"/>
    <property type="evidence" value="ECO:0007669"/>
    <property type="project" value="InterPro"/>
</dbReference>
<dbReference type="GO" id="GO:0046872">
    <property type="term" value="F:metal ion binding"/>
    <property type="evidence" value="ECO:0007669"/>
    <property type="project" value="UniProtKB-KW"/>
</dbReference>
<dbReference type="GO" id="GO:0008121">
    <property type="term" value="F:ubiquinol-cytochrome-c reductase activity"/>
    <property type="evidence" value="ECO:0007669"/>
    <property type="project" value="InterPro"/>
</dbReference>
<dbReference type="GO" id="GO:0006122">
    <property type="term" value="P:mitochondrial electron transport, ubiquinol to cytochrome c"/>
    <property type="evidence" value="ECO:0007669"/>
    <property type="project" value="TreeGrafter"/>
</dbReference>
<dbReference type="CDD" id="cd00290">
    <property type="entry name" value="cytochrome_b_C"/>
    <property type="match status" value="1"/>
</dbReference>
<dbReference type="CDD" id="cd00284">
    <property type="entry name" value="Cytochrome_b_N"/>
    <property type="match status" value="1"/>
</dbReference>
<dbReference type="FunFam" id="1.20.810.10:FF:000002">
    <property type="entry name" value="Cytochrome b"/>
    <property type="match status" value="1"/>
</dbReference>
<dbReference type="Gene3D" id="1.20.810.10">
    <property type="entry name" value="Cytochrome Bc1 Complex, Chain C"/>
    <property type="match status" value="1"/>
</dbReference>
<dbReference type="InterPro" id="IPR005798">
    <property type="entry name" value="Cyt_b/b6_C"/>
</dbReference>
<dbReference type="InterPro" id="IPR036150">
    <property type="entry name" value="Cyt_b/b6_C_sf"/>
</dbReference>
<dbReference type="InterPro" id="IPR005797">
    <property type="entry name" value="Cyt_b/b6_N"/>
</dbReference>
<dbReference type="InterPro" id="IPR027387">
    <property type="entry name" value="Cytb/b6-like_sf"/>
</dbReference>
<dbReference type="InterPro" id="IPR030689">
    <property type="entry name" value="Cytochrome_b"/>
</dbReference>
<dbReference type="InterPro" id="IPR048260">
    <property type="entry name" value="Cytochrome_b_C_euk/bac"/>
</dbReference>
<dbReference type="InterPro" id="IPR048259">
    <property type="entry name" value="Cytochrome_b_N_euk/bac"/>
</dbReference>
<dbReference type="InterPro" id="IPR016174">
    <property type="entry name" value="Di-haem_cyt_TM"/>
</dbReference>
<dbReference type="PANTHER" id="PTHR19271">
    <property type="entry name" value="CYTOCHROME B"/>
    <property type="match status" value="1"/>
</dbReference>
<dbReference type="PANTHER" id="PTHR19271:SF16">
    <property type="entry name" value="CYTOCHROME B"/>
    <property type="match status" value="1"/>
</dbReference>
<dbReference type="Pfam" id="PF00032">
    <property type="entry name" value="Cytochrom_B_C"/>
    <property type="match status" value="1"/>
</dbReference>
<dbReference type="Pfam" id="PF00033">
    <property type="entry name" value="Cytochrome_B"/>
    <property type="match status" value="1"/>
</dbReference>
<dbReference type="PIRSF" id="PIRSF038885">
    <property type="entry name" value="COB"/>
    <property type="match status" value="1"/>
</dbReference>
<dbReference type="SUPFAM" id="SSF81648">
    <property type="entry name" value="a domain/subunit of cytochrome bc1 complex (Ubiquinol-cytochrome c reductase)"/>
    <property type="match status" value="1"/>
</dbReference>
<dbReference type="SUPFAM" id="SSF81342">
    <property type="entry name" value="Transmembrane di-heme cytochromes"/>
    <property type="match status" value="1"/>
</dbReference>
<dbReference type="PROSITE" id="PS51003">
    <property type="entry name" value="CYTB_CTER"/>
    <property type="match status" value="1"/>
</dbReference>
<dbReference type="PROSITE" id="PS51002">
    <property type="entry name" value="CYTB_NTER"/>
    <property type="match status" value="1"/>
</dbReference>
<name>CYB_MYOTH</name>
<proteinExistence type="inferred from homology"/>
<keyword id="KW-0249">Electron transport</keyword>
<keyword id="KW-0349">Heme</keyword>
<keyword id="KW-0408">Iron</keyword>
<keyword id="KW-0472">Membrane</keyword>
<keyword id="KW-0479">Metal-binding</keyword>
<keyword id="KW-0496">Mitochondrion</keyword>
<keyword id="KW-0999">Mitochondrion inner membrane</keyword>
<keyword id="KW-0679">Respiratory chain</keyword>
<keyword id="KW-0812">Transmembrane</keyword>
<keyword id="KW-1133">Transmembrane helix</keyword>
<keyword id="KW-0813">Transport</keyword>
<keyword id="KW-0830">Ubiquinone</keyword>
<reference key="1">
    <citation type="journal article" date="2001" name="Mol. Phylogenet. Evol.">
        <title>Molecular systematics of bats of the genus Myotis (Vespertilionidae) suggests deterministic ecomorphological convergences.</title>
        <authorList>
            <person name="Ruedi M."/>
            <person name="Mayer F."/>
        </authorList>
    </citation>
    <scope>NUCLEOTIDE SEQUENCE [GENOMIC DNA]</scope>
    <source>
        <strain>Isolate TK 78796</strain>
    </source>
</reference>